<accession>Q83I74</accession>
<dbReference type="EMBL" id="BX251410">
    <property type="protein sequence ID" value="CAD66888.1"/>
    <property type="molecule type" value="Genomic_DNA"/>
</dbReference>
<dbReference type="RefSeq" id="WP_011096169.1">
    <property type="nucleotide sequence ID" value="NC_004551.1"/>
</dbReference>
<dbReference type="SMR" id="Q83I74"/>
<dbReference type="GeneID" id="67387987"/>
<dbReference type="KEGG" id="tws:TW211"/>
<dbReference type="HOGENOM" id="CLU_144911_0_1_11"/>
<dbReference type="GO" id="GO:0005737">
    <property type="term" value="C:cytoplasm"/>
    <property type="evidence" value="ECO:0007669"/>
    <property type="project" value="UniProtKB-ARBA"/>
</dbReference>
<dbReference type="GO" id="GO:0015935">
    <property type="term" value="C:small ribosomal subunit"/>
    <property type="evidence" value="ECO:0007669"/>
    <property type="project" value="InterPro"/>
</dbReference>
<dbReference type="GO" id="GO:0019843">
    <property type="term" value="F:rRNA binding"/>
    <property type="evidence" value="ECO:0007669"/>
    <property type="project" value="UniProtKB-UniRule"/>
</dbReference>
<dbReference type="GO" id="GO:0003735">
    <property type="term" value="F:structural constituent of ribosome"/>
    <property type="evidence" value="ECO:0007669"/>
    <property type="project" value="InterPro"/>
</dbReference>
<dbReference type="GO" id="GO:0000028">
    <property type="term" value="P:ribosomal small subunit assembly"/>
    <property type="evidence" value="ECO:0007669"/>
    <property type="project" value="TreeGrafter"/>
</dbReference>
<dbReference type="GO" id="GO:0006412">
    <property type="term" value="P:translation"/>
    <property type="evidence" value="ECO:0007669"/>
    <property type="project" value="UniProtKB-UniRule"/>
</dbReference>
<dbReference type="FunFam" id="3.30.860.10:FF:000001">
    <property type="entry name" value="30S ribosomal protein S19"/>
    <property type="match status" value="1"/>
</dbReference>
<dbReference type="Gene3D" id="3.30.860.10">
    <property type="entry name" value="30s Ribosomal Protein S19, Chain A"/>
    <property type="match status" value="1"/>
</dbReference>
<dbReference type="HAMAP" id="MF_00531">
    <property type="entry name" value="Ribosomal_uS19"/>
    <property type="match status" value="1"/>
</dbReference>
<dbReference type="InterPro" id="IPR002222">
    <property type="entry name" value="Ribosomal_uS19"/>
</dbReference>
<dbReference type="InterPro" id="IPR005732">
    <property type="entry name" value="Ribosomal_uS19_bac-type"/>
</dbReference>
<dbReference type="InterPro" id="IPR020934">
    <property type="entry name" value="Ribosomal_uS19_CS"/>
</dbReference>
<dbReference type="InterPro" id="IPR023575">
    <property type="entry name" value="Ribosomal_uS19_SF"/>
</dbReference>
<dbReference type="NCBIfam" id="TIGR01050">
    <property type="entry name" value="rpsS_bact"/>
    <property type="match status" value="1"/>
</dbReference>
<dbReference type="PANTHER" id="PTHR11880">
    <property type="entry name" value="RIBOSOMAL PROTEIN S19P FAMILY MEMBER"/>
    <property type="match status" value="1"/>
</dbReference>
<dbReference type="PANTHER" id="PTHR11880:SF8">
    <property type="entry name" value="SMALL RIBOSOMAL SUBUNIT PROTEIN US19M"/>
    <property type="match status" value="1"/>
</dbReference>
<dbReference type="Pfam" id="PF00203">
    <property type="entry name" value="Ribosomal_S19"/>
    <property type="match status" value="1"/>
</dbReference>
<dbReference type="PIRSF" id="PIRSF002144">
    <property type="entry name" value="Ribosomal_S19"/>
    <property type="match status" value="1"/>
</dbReference>
<dbReference type="PRINTS" id="PR00975">
    <property type="entry name" value="RIBOSOMALS19"/>
</dbReference>
<dbReference type="SUPFAM" id="SSF54570">
    <property type="entry name" value="Ribosomal protein S19"/>
    <property type="match status" value="1"/>
</dbReference>
<dbReference type="PROSITE" id="PS00323">
    <property type="entry name" value="RIBOSOMAL_S19"/>
    <property type="match status" value="1"/>
</dbReference>
<reference key="1">
    <citation type="journal article" date="2003" name="Lancet">
        <title>Sequencing and analysis of the genome of the Whipple's disease bacterium Tropheryma whipplei.</title>
        <authorList>
            <person name="Bentley S.D."/>
            <person name="Maiwald M."/>
            <person name="Murphy L.D."/>
            <person name="Pallen M.J."/>
            <person name="Yeats C.A."/>
            <person name="Dover L.G."/>
            <person name="Norbertczak H.T."/>
            <person name="Besra G.S."/>
            <person name="Quail M.A."/>
            <person name="Harris D.E."/>
            <person name="von Herbay A."/>
            <person name="Goble A."/>
            <person name="Rutter S."/>
            <person name="Squares R."/>
            <person name="Squares S."/>
            <person name="Barrell B.G."/>
            <person name="Parkhill J."/>
            <person name="Relman D.A."/>
        </authorList>
    </citation>
    <scope>NUCLEOTIDE SEQUENCE [LARGE SCALE GENOMIC DNA]</scope>
    <source>
        <strain>TW08/27</strain>
    </source>
</reference>
<sequence length="93" mass="10873">MPRSLKKGPFVDMHLLKKVRAGNESKDRNMIKTWSRRSMIIPEMLGHTIAVHDGRRHIPVFITESMVGHKLGEFAPTRTYRGHVKDDRKARRR</sequence>
<proteinExistence type="inferred from homology"/>
<feature type="chain" id="PRO_0000129933" description="Small ribosomal subunit protein uS19">
    <location>
        <begin position="1"/>
        <end position="93"/>
    </location>
</feature>
<gene>
    <name evidence="1" type="primary">rpsS</name>
    <name type="ordered locus">TW211</name>
</gene>
<comment type="function">
    <text evidence="1">Protein S19 forms a complex with S13 that binds strongly to the 16S ribosomal RNA.</text>
</comment>
<comment type="similarity">
    <text evidence="1">Belongs to the universal ribosomal protein uS19 family.</text>
</comment>
<protein>
    <recommendedName>
        <fullName evidence="1">Small ribosomal subunit protein uS19</fullName>
    </recommendedName>
    <alternativeName>
        <fullName evidence="2">30S ribosomal protein S19</fullName>
    </alternativeName>
</protein>
<name>RS19_TROW8</name>
<organism>
    <name type="scientific">Tropheryma whipplei (strain TW08/27)</name>
    <name type="common">Whipple's bacillus</name>
    <dbReference type="NCBI Taxonomy" id="218496"/>
    <lineage>
        <taxon>Bacteria</taxon>
        <taxon>Bacillati</taxon>
        <taxon>Actinomycetota</taxon>
        <taxon>Actinomycetes</taxon>
        <taxon>Micrococcales</taxon>
        <taxon>Tropherymataceae</taxon>
        <taxon>Tropheryma</taxon>
    </lineage>
</organism>
<evidence type="ECO:0000255" key="1">
    <source>
        <dbReference type="HAMAP-Rule" id="MF_00531"/>
    </source>
</evidence>
<evidence type="ECO:0000305" key="2"/>
<keyword id="KW-0687">Ribonucleoprotein</keyword>
<keyword id="KW-0689">Ribosomal protein</keyword>
<keyword id="KW-0694">RNA-binding</keyword>
<keyword id="KW-0699">rRNA-binding</keyword>